<proteinExistence type="inferred from homology"/>
<gene>
    <name type="primary">ND4</name>
</gene>
<evidence type="ECO:0000250" key="1"/>
<evidence type="ECO:0000255" key="2"/>
<evidence type="ECO:0000305" key="3"/>
<sequence>MMITLILFTTGIVMTTLVIPQNKLWANAISQSALLSLSSPLLIFSNHWSAPWHNLSNILASDSISAPLIALSCWLAPISLIASNNTISKQSELNQRTFIIIVIFIAGALIITFSALELLLFYVAFETTLIPTLILITRWGAQMERFQAGLYFMFYTLFGSLPLLISLIAIYISSSSLSIPNVELIWTPSETMETLNIWWALSIIAFLIKMPIYGFHLWLPKAHVEAPVAGSMILAAILLKLGGYGLIRLINLFATISLNSLSLALITFCSWGALVTSIICVRQTDLKALIAYSSVGHMSIVAAAIFSSTNWGTNGALILMIAYGLVSSDLFSLANTVYERSGTRTLAITRGLKTILPLSTLWWLVMSAANLGLPPSPNLIGEILILSSLIAWSIWLFPIIGLATIFGAIYSLMIFQLSQQGTPTNNINNISLSFSREHLLATLHTLPLILIIINPISALITWLK</sequence>
<protein>
    <recommendedName>
        <fullName>NADH-ubiquinone oxidoreductase chain 4</fullName>
        <ecNumber>7.1.1.2</ecNumber>
    </recommendedName>
    <alternativeName>
        <fullName>NADH dehydrogenase subunit 4</fullName>
    </alternativeName>
</protein>
<dbReference type="EC" id="7.1.1.2"/>
<dbReference type="EMBL" id="J04815">
    <property type="protein sequence ID" value="AAA68142.2"/>
    <property type="molecule type" value="Genomic_DNA"/>
</dbReference>
<dbReference type="EMBL" id="M16525">
    <property type="protein sequence ID" value="AAA31996.2"/>
    <property type="molecule type" value="Genomic_DNA"/>
</dbReference>
<dbReference type="EMBL" id="M16526">
    <property type="protein sequence ID" value="AAA31997.1"/>
    <property type="molecule type" value="Genomic_DNA"/>
</dbReference>
<dbReference type="PIR" id="A34285">
    <property type="entry name" value="A34285"/>
</dbReference>
<dbReference type="RefSeq" id="NP_008130.2">
    <property type="nucleotide sequence ID" value="NC_001572.1"/>
</dbReference>
<dbReference type="SMR" id="P12775"/>
<dbReference type="GeneID" id="807716"/>
<dbReference type="CTD" id="4538"/>
<dbReference type="GO" id="GO:0031966">
    <property type="term" value="C:mitochondrial membrane"/>
    <property type="evidence" value="ECO:0007669"/>
    <property type="project" value="UniProtKB-SubCell"/>
</dbReference>
<dbReference type="GO" id="GO:0008137">
    <property type="term" value="F:NADH dehydrogenase (ubiquinone) activity"/>
    <property type="evidence" value="ECO:0007669"/>
    <property type="project" value="UniProtKB-EC"/>
</dbReference>
<dbReference type="GO" id="GO:0048039">
    <property type="term" value="F:ubiquinone binding"/>
    <property type="evidence" value="ECO:0007669"/>
    <property type="project" value="TreeGrafter"/>
</dbReference>
<dbReference type="GO" id="GO:0042773">
    <property type="term" value="P:ATP synthesis coupled electron transport"/>
    <property type="evidence" value="ECO:0007669"/>
    <property type="project" value="InterPro"/>
</dbReference>
<dbReference type="GO" id="GO:0015990">
    <property type="term" value="P:electron transport coupled proton transport"/>
    <property type="evidence" value="ECO:0007669"/>
    <property type="project" value="TreeGrafter"/>
</dbReference>
<dbReference type="InterPro" id="IPR000260">
    <property type="entry name" value="NADH4_N"/>
</dbReference>
<dbReference type="InterPro" id="IPR010227">
    <property type="entry name" value="NADH_Q_OxRdtase_chainM/4"/>
</dbReference>
<dbReference type="InterPro" id="IPR003918">
    <property type="entry name" value="NADH_UbQ_OxRdtase"/>
</dbReference>
<dbReference type="InterPro" id="IPR001750">
    <property type="entry name" value="ND/Mrp_TM"/>
</dbReference>
<dbReference type="NCBIfam" id="TIGR01972">
    <property type="entry name" value="NDH_I_M"/>
    <property type="match status" value="1"/>
</dbReference>
<dbReference type="PANTHER" id="PTHR43507">
    <property type="entry name" value="NADH-UBIQUINONE OXIDOREDUCTASE CHAIN 4"/>
    <property type="match status" value="1"/>
</dbReference>
<dbReference type="PANTHER" id="PTHR43507:SF20">
    <property type="entry name" value="NADH-UBIQUINONE OXIDOREDUCTASE CHAIN 4"/>
    <property type="match status" value="1"/>
</dbReference>
<dbReference type="Pfam" id="PF01059">
    <property type="entry name" value="Oxidored_q5_N"/>
    <property type="match status" value="1"/>
</dbReference>
<dbReference type="Pfam" id="PF00361">
    <property type="entry name" value="Proton_antipo_M"/>
    <property type="match status" value="1"/>
</dbReference>
<dbReference type="PRINTS" id="PR01437">
    <property type="entry name" value="NUOXDRDTASE4"/>
</dbReference>
<accession>P12775</accession>
<name>NU4M_PARLI</name>
<comment type="function">
    <text evidence="1">Core subunit of the mitochondrial membrane respiratory chain NADH dehydrogenase (Complex I) that is believed to belong to the minimal assembly required for catalysis. Complex I functions in the transfer of electrons from NADH to the respiratory chain. The immediate electron acceptor for the enzyme is believed to be ubiquinone (By similarity).</text>
</comment>
<comment type="catalytic activity">
    <reaction>
        <text>a ubiquinone + NADH + 5 H(+)(in) = a ubiquinol + NAD(+) + 4 H(+)(out)</text>
        <dbReference type="Rhea" id="RHEA:29091"/>
        <dbReference type="Rhea" id="RHEA-COMP:9565"/>
        <dbReference type="Rhea" id="RHEA-COMP:9566"/>
        <dbReference type="ChEBI" id="CHEBI:15378"/>
        <dbReference type="ChEBI" id="CHEBI:16389"/>
        <dbReference type="ChEBI" id="CHEBI:17976"/>
        <dbReference type="ChEBI" id="CHEBI:57540"/>
        <dbReference type="ChEBI" id="CHEBI:57945"/>
        <dbReference type="EC" id="7.1.1.2"/>
    </reaction>
</comment>
<comment type="subcellular location">
    <subcellularLocation>
        <location evidence="1">Mitochondrion membrane</location>
        <topology evidence="1">Multi-pass membrane protein</topology>
    </subcellularLocation>
</comment>
<comment type="similarity">
    <text evidence="3">Belongs to the complex I subunit 4 family.</text>
</comment>
<keyword id="KW-0249">Electron transport</keyword>
<keyword id="KW-0472">Membrane</keyword>
<keyword id="KW-0496">Mitochondrion</keyword>
<keyword id="KW-0520">NAD</keyword>
<keyword id="KW-0679">Respiratory chain</keyword>
<keyword id="KW-1278">Translocase</keyword>
<keyword id="KW-0812">Transmembrane</keyword>
<keyword id="KW-1133">Transmembrane helix</keyword>
<keyword id="KW-0813">Transport</keyword>
<keyword id="KW-0830">Ubiquinone</keyword>
<feature type="chain" id="PRO_0000117964" description="NADH-ubiquinone oxidoreductase chain 4">
    <location>
        <begin position="1"/>
        <end position="464"/>
    </location>
</feature>
<feature type="transmembrane region" description="Helical" evidence="2">
    <location>
        <begin position="1"/>
        <end position="21"/>
    </location>
</feature>
<feature type="transmembrane region" description="Helical" evidence="2">
    <location>
        <begin position="63"/>
        <end position="83"/>
    </location>
</feature>
<feature type="transmembrane region" description="Helical" evidence="2">
    <location>
        <begin position="98"/>
        <end position="118"/>
    </location>
</feature>
<feature type="transmembrane region" description="Helical" evidence="2">
    <location>
        <begin position="119"/>
        <end position="139"/>
    </location>
</feature>
<feature type="transmembrane region" description="Helical" evidence="2">
    <location>
        <begin position="152"/>
        <end position="172"/>
    </location>
</feature>
<feature type="transmembrane region" description="Helical" evidence="2">
    <location>
        <begin position="197"/>
        <end position="217"/>
    </location>
</feature>
<feature type="transmembrane region" description="Helical" evidence="2">
    <location>
        <begin position="227"/>
        <end position="247"/>
    </location>
</feature>
<feature type="transmembrane region" description="Helical" evidence="2">
    <location>
        <begin position="261"/>
        <end position="281"/>
    </location>
</feature>
<feature type="transmembrane region" description="Helical" evidence="2">
    <location>
        <begin position="288"/>
        <end position="308"/>
    </location>
</feature>
<feature type="transmembrane region" description="Helical" evidence="2">
    <location>
        <begin position="314"/>
        <end position="334"/>
    </location>
</feature>
<feature type="transmembrane region" description="Helical" evidence="2">
    <location>
        <begin position="355"/>
        <end position="375"/>
    </location>
</feature>
<feature type="transmembrane region" description="Helical" evidence="2">
    <location>
        <begin position="389"/>
        <end position="409"/>
    </location>
</feature>
<feature type="transmembrane region" description="Helical" evidence="2">
    <location>
        <begin position="443"/>
        <end position="463"/>
    </location>
</feature>
<reference key="1">
    <citation type="journal article" date="1989" name="J. Biol. Chem.">
        <title>The complete nucleotide sequence, gene organization, and genetic code of the mitochondrial genome of Paracentrotus lividus.</title>
        <authorList>
            <person name="Cantatore P."/>
            <person name="Roberti M."/>
            <person name="Rainaldi G."/>
            <person name="Gadaleta M.N."/>
            <person name="Saccone C."/>
        </authorList>
    </citation>
    <scope>NUCLEOTIDE SEQUENCE [GENOMIC DNA]</scope>
</reference>
<reference key="2">
    <citation type="journal article" date="1987" name="Gene">
        <title>A novel gene order in the Paracentrotus lividus mitochondrial genome.</title>
        <authorList>
            <person name="Cantatore P."/>
            <person name="Roberti M."/>
            <person name="Morisco P."/>
            <person name="Rainaldi G."/>
            <person name="Gadaleta M.N."/>
            <person name="Saccone C."/>
        </authorList>
    </citation>
    <scope>NUCLEOTIDE SEQUENCE [GENOMIC DNA] OF 172-226 AND 231-250</scope>
</reference>
<geneLocation type="mitochondrion"/>
<organism>
    <name type="scientific">Paracentrotus lividus</name>
    <name type="common">Common sea urchin</name>
    <dbReference type="NCBI Taxonomy" id="7656"/>
    <lineage>
        <taxon>Eukaryota</taxon>
        <taxon>Metazoa</taxon>
        <taxon>Echinodermata</taxon>
        <taxon>Eleutherozoa</taxon>
        <taxon>Echinozoa</taxon>
        <taxon>Echinoidea</taxon>
        <taxon>Euechinoidea</taxon>
        <taxon>Echinacea</taxon>
        <taxon>Camarodonta</taxon>
        <taxon>Echinidea</taxon>
        <taxon>Echinidae</taxon>
        <taxon>Paracentrotus</taxon>
    </lineage>
</organism>